<evidence type="ECO:0000250" key="1"/>
<evidence type="ECO:0000250" key="2">
    <source>
        <dbReference type="UniProtKB" id="P16892"/>
    </source>
</evidence>
<evidence type="ECO:0000250" key="3">
    <source>
        <dbReference type="UniProtKB" id="P27638"/>
    </source>
</evidence>
<evidence type="ECO:0000255" key="4">
    <source>
        <dbReference type="PROSITE-ProRule" id="PRU00159"/>
    </source>
</evidence>
<evidence type="ECO:0000255" key="5">
    <source>
        <dbReference type="PROSITE-ProRule" id="PRU10027"/>
    </source>
</evidence>
<evidence type="ECO:0000269" key="6">
    <source>
    </source>
</evidence>
<evidence type="ECO:0000269" key="7">
    <source>
    </source>
</evidence>
<evidence type="ECO:0000305" key="8"/>
<evidence type="ECO:0000312" key="9">
    <source>
        <dbReference type="EMBL" id="AAC27327.1"/>
    </source>
</evidence>
<evidence type="ECO:0000312" key="10">
    <source>
        <dbReference type="EMBL" id="AAC98088.1"/>
    </source>
</evidence>
<protein>
    <recommendedName>
        <fullName>Mitogen-activated protein kinase 2</fullName>
        <ecNumber>2.7.11.24</ecNumber>
    </recommendedName>
    <alternativeName>
        <fullName>PCM</fullName>
    </alternativeName>
</protein>
<dbReference type="EC" id="2.7.11.24"/>
<dbReference type="EMBL" id="AF043941">
    <property type="protein sequence ID" value="AAC98088.1"/>
    <property type="molecule type" value="mRNA"/>
</dbReference>
<dbReference type="EMBL" id="AF077548">
    <property type="protein sequence ID" value="AAC27327.1"/>
    <property type="molecule type" value="Genomic_DNA"/>
</dbReference>
<dbReference type="SMR" id="O42781"/>
<dbReference type="BindingDB" id="O42781"/>
<dbReference type="ChEMBL" id="CHEMBL5169219"/>
<dbReference type="VEuPathDB" id="FungiDB:T552_02142"/>
<dbReference type="GO" id="GO:0005634">
    <property type="term" value="C:nucleus"/>
    <property type="evidence" value="ECO:0007669"/>
    <property type="project" value="UniProtKB-SubCell"/>
</dbReference>
<dbReference type="GO" id="GO:0005524">
    <property type="term" value="F:ATP binding"/>
    <property type="evidence" value="ECO:0007669"/>
    <property type="project" value="UniProtKB-KW"/>
</dbReference>
<dbReference type="GO" id="GO:0004707">
    <property type="term" value="F:MAP kinase activity"/>
    <property type="evidence" value="ECO:0000314"/>
    <property type="project" value="UniProtKB"/>
</dbReference>
<dbReference type="GO" id="GO:0106310">
    <property type="term" value="F:protein serine kinase activity"/>
    <property type="evidence" value="ECO:0007669"/>
    <property type="project" value="RHEA"/>
</dbReference>
<dbReference type="GO" id="GO:0000751">
    <property type="term" value="P:mitotic cell cycle G1 arrest in response to pheromone"/>
    <property type="evidence" value="ECO:0000303"/>
    <property type="project" value="UniProtKB"/>
</dbReference>
<dbReference type="GO" id="GO:0019236">
    <property type="term" value="P:response to pheromone"/>
    <property type="evidence" value="ECO:0000314"/>
    <property type="project" value="UniProtKB"/>
</dbReference>
<dbReference type="GO" id="GO:0007165">
    <property type="term" value="P:signal transduction"/>
    <property type="evidence" value="ECO:0000315"/>
    <property type="project" value="UniProtKB"/>
</dbReference>
<dbReference type="CDD" id="cd07849">
    <property type="entry name" value="STKc_ERK1_2_like"/>
    <property type="match status" value="1"/>
</dbReference>
<dbReference type="FunFam" id="1.10.510.10:FF:000040">
    <property type="entry name" value="Mitogen-activated protein kinase"/>
    <property type="match status" value="1"/>
</dbReference>
<dbReference type="FunFam" id="3.30.200.20:FF:000073">
    <property type="entry name" value="Mitogen-activated protein kinase"/>
    <property type="match status" value="1"/>
</dbReference>
<dbReference type="Gene3D" id="3.30.200.20">
    <property type="entry name" value="Phosphorylase Kinase, domain 1"/>
    <property type="match status" value="1"/>
</dbReference>
<dbReference type="Gene3D" id="1.10.510.10">
    <property type="entry name" value="Transferase(Phosphotransferase) domain 1"/>
    <property type="match status" value="1"/>
</dbReference>
<dbReference type="InterPro" id="IPR011009">
    <property type="entry name" value="Kinase-like_dom_sf"/>
</dbReference>
<dbReference type="InterPro" id="IPR050117">
    <property type="entry name" value="MAP_kinase"/>
</dbReference>
<dbReference type="InterPro" id="IPR003527">
    <property type="entry name" value="MAP_kinase_CS"/>
</dbReference>
<dbReference type="InterPro" id="IPR008352">
    <property type="entry name" value="MAPK_p38-like"/>
</dbReference>
<dbReference type="InterPro" id="IPR000719">
    <property type="entry name" value="Prot_kinase_dom"/>
</dbReference>
<dbReference type="InterPro" id="IPR017441">
    <property type="entry name" value="Protein_kinase_ATP_BS"/>
</dbReference>
<dbReference type="InterPro" id="IPR008271">
    <property type="entry name" value="Ser/Thr_kinase_AS"/>
</dbReference>
<dbReference type="PANTHER" id="PTHR24055">
    <property type="entry name" value="MITOGEN-ACTIVATED PROTEIN KINASE"/>
    <property type="match status" value="1"/>
</dbReference>
<dbReference type="Pfam" id="PF00069">
    <property type="entry name" value="Pkinase"/>
    <property type="match status" value="1"/>
</dbReference>
<dbReference type="PRINTS" id="PR01773">
    <property type="entry name" value="P38MAPKINASE"/>
</dbReference>
<dbReference type="SMART" id="SM00220">
    <property type="entry name" value="S_TKc"/>
    <property type="match status" value="1"/>
</dbReference>
<dbReference type="SUPFAM" id="SSF56112">
    <property type="entry name" value="Protein kinase-like (PK-like)"/>
    <property type="match status" value="1"/>
</dbReference>
<dbReference type="PROSITE" id="PS01351">
    <property type="entry name" value="MAPK"/>
    <property type="match status" value="1"/>
</dbReference>
<dbReference type="PROSITE" id="PS00107">
    <property type="entry name" value="PROTEIN_KINASE_ATP"/>
    <property type="match status" value="1"/>
</dbReference>
<dbReference type="PROSITE" id="PS50011">
    <property type="entry name" value="PROTEIN_KINASE_DOM"/>
    <property type="match status" value="1"/>
</dbReference>
<dbReference type="PROSITE" id="PS00108">
    <property type="entry name" value="PROTEIN_KINASE_ST"/>
    <property type="match status" value="1"/>
</dbReference>
<comment type="function">
    <text evidence="6 7">Serine-threonine protein kinase which may be involved in pheromone signaling. Functionally complements the MAPK pheromone signaling pathway in S.cerevisiae.</text>
</comment>
<comment type="catalytic activity">
    <reaction evidence="7">
        <text>L-seryl-[protein] + ATP = O-phospho-L-seryl-[protein] + ADP + H(+)</text>
        <dbReference type="Rhea" id="RHEA:17989"/>
        <dbReference type="Rhea" id="RHEA-COMP:9863"/>
        <dbReference type="Rhea" id="RHEA-COMP:11604"/>
        <dbReference type="ChEBI" id="CHEBI:15378"/>
        <dbReference type="ChEBI" id="CHEBI:29999"/>
        <dbReference type="ChEBI" id="CHEBI:30616"/>
        <dbReference type="ChEBI" id="CHEBI:83421"/>
        <dbReference type="ChEBI" id="CHEBI:456216"/>
        <dbReference type="EC" id="2.7.11.24"/>
    </reaction>
</comment>
<comment type="catalytic activity">
    <reaction evidence="7">
        <text>L-threonyl-[protein] + ATP = O-phospho-L-threonyl-[protein] + ADP + H(+)</text>
        <dbReference type="Rhea" id="RHEA:46608"/>
        <dbReference type="Rhea" id="RHEA-COMP:11060"/>
        <dbReference type="Rhea" id="RHEA-COMP:11605"/>
        <dbReference type="ChEBI" id="CHEBI:15378"/>
        <dbReference type="ChEBI" id="CHEBI:30013"/>
        <dbReference type="ChEBI" id="CHEBI:30616"/>
        <dbReference type="ChEBI" id="CHEBI:61977"/>
        <dbReference type="ChEBI" id="CHEBI:456216"/>
        <dbReference type="EC" id="2.7.11.24"/>
    </reaction>
</comment>
<comment type="cofactor">
    <cofactor evidence="6">
        <name>Mg(2+)</name>
        <dbReference type="ChEBI" id="CHEBI:18420"/>
    </cofactor>
    <cofactor evidence="6">
        <name>Mn(2+)</name>
        <dbReference type="ChEBI" id="CHEBI:29035"/>
    </cofactor>
    <text evidence="6">Divalent cations including magnesium and manganese.</text>
</comment>
<comment type="activity regulation">
    <text evidence="1">Activated by tyrosine and threonine phosphorylation (By similarity). Inhibited by the MEK inhibitor U0126 but not by the p38 inhibitor SB203580. Cobalt abolishes kinase activity, while calcium, copper and nickel have little effect on kinase activity.</text>
</comment>
<comment type="biophysicochemical properties">
    <phDependence>
        <text evidence="6">Optimum pH is 6.5.</text>
    </phDependence>
    <temperatureDependence>
        <text evidence="6">Optimum temperature is 30-35 degrees Celsius.</text>
    </temperatureDependence>
</comment>
<comment type="subcellular location">
    <subcellularLocation>
        <location evidence="3">Nucleus</location>
    </subcellularLocation>
</comment>
<comment type="developmental stage">
    <text evidence="6">Activity is significantly higher in trophic forms than in cysts.</text>
</comment>
<comment type="domain">
    <text>The TXY motif contains the threonine and tyrosine residues whose phosphorylation activates the MAP kinases.</text>
</comment>
<comment type="PTM">
    <text evidence="1">Dually phosphorylated on Thr-176 and Tyr-178, which activates the enzyme.</text>
</comment>
<comment type="similarity">
    <text evidence="8">Belongs to the protein kinase superfamily. CMGC Ser/Thr protein kinase family. MAP kinase subfamily.</text>
</comment>
<gene>
    <name evidence="10" type="primary">MKP2</name>
    <name evidence="9" type="synonym">MAPK</name>
</gene>
<reference evidence="8 10" key="1">
    <citation type="journal article" date="1998" name="Am. J. Physiol.">
        <title>Characterization of a mitogen-activated protein kinase from Pneumocystis carinii.</title>
        <authorList>
            <person name="Thomas C.F. Jr."/>
            <person name="Kottom T.J."/>
            <person name="Leof E.B."/>
            <person name="Limper A.H."/>
        </authorList>
    </citation>
    <scope>NUCLEOTIDE SEQUENCE [MRNA]</scope>
    <scope>FUNCTION</scope>
    <scope>CATALYTIC ACTIVITY</scope>
</reference>
<reference evidence="9" key="2">
    <citation type="submission" date="1998-07" db="EMBL/GenBank/DDBJ databases">
        <authorList>
            <person name="Smulian A.G."/>
        </authorList>
    </citation>
    <scope>NUCLEOTIDE SEQUENCE [GENOMIC DNA]</scope>
</reference>
<reference evidence="8" key="3">
    <citation type="journal article" date="2003" name="FEBS Lett.">
        <title>Complementation and characterization of the Pneumocystis carinii MAPK, PCM.</title>
        <authorList>
            <person name="Vohra P.K."/>
            <person name="Puri V."/>
            <person name="Thomas C.F. Jr."/>
        </authorList>
    </citation>
    <scope>FUNCTION</scope>
    <scope>COFACTOR</scope>
    <scope>BIOPHYSICOCHEMICAL PROPERTIES</scope>
    <scope>DEVELOPMENTAL STAGE</scope>
</reference>
<proteinExistence type="evidence at protein level"/>
<sequence>MTASSRNVRFNVSDDYEILDVIGEGAYGIVCSAIHKPSGQKVAIKKISPFDHSMFCLRTLREMKLLRYFNHENIISILDIQQPQDFESFSEVYLIQELMETDMHRVIRTQDLSDDHCQYFIYQILRALKAMHSADILHRDLKPSNLLLNANCDLKVCDFGLARSAVSTEDSSSFMTEYVATRWYRAPEIMLTFKEYTKAIDIWSVGCILAEMLSGRPLFPGKDYHHQLMLILDVLGTPTMEDYYGIKSRRAREYIRSLPFKKRVSFASIFPRANPLALDLLEKLLAFNPAKRVTAEEALQHNYLEPYHDPDDEPTAPPISPSFFDFDRIKDSLTKNDLKILIYKEIMSMNN</sequence>
<organism>
    <name type="scientific">Pneumocystis carinii</name>
    <dbReference type="NCBI Taxonomy" id="4754"/>
    <lineage>
        <taxon>Eukaryota</taxon>
        <taxon>Fungi</taxon>
        <taxon>Dikarya</taxon>
        <taxon>Ascomycota</taxon>
        <taxon>Taphrinomycotina</taxon>
        <taxon>Pneumocystomycetes</taxon>
        <taxon>Pneumocystaceae</taxon>
        <taxon>Pneumocystis</taxon>
    </lineage>
</organism>
<accession>O42781</accession>
<keyword id="KW-0067">ATP-binding</keyword>
<keyword id="KW-0418">Kinase</keyword>
<keyword id="KW-0547">Nucleotide-binding</keyword>
<keyword id="KW-0539">Nucleus</keyword>
<keyword id="KW-0597">Phosphoprotein</keyword>
<keyword id="KW-0723">Serine/threonine-protein kinase</keyword>
<keyword id="KW-0808">Transferase</keyword>
<name>MAPK2_PNECA</name>
<feature type="chain" id="PRO_0000247744" description="Mitogen-activated protein kinase 2">
    <location>
        <begin position="1"/>
        <end position="351"/>
    </location>
</feature>
<feature type="domain" description="Protein kinase" evidence="4">
    <location>
        <begin position="16"/>
        <end position="304"/>
    </location>
</feature>
<feature type="short sequence motif" description="TXY">
    <location>
        <begin position="176"/>
        <end position="178"/>
    </location>
</feature>
<feature type="active site" description="Proton acceptor" evidence="4 5">
    <location>
        <position position="140"/>
    </location>
</feature>
<feature type="binding site" evidence="4">
    <location>
        <begin position="22"/>
        <end position="30"/>
    </location>
    <ligand>
        <name>ATP</name>
        <dbReference type="ChEBI" id="CHEBI:30616"/>
    </ligand>
</feature>
<feature type="binding site" evidence="4">
    <location>
        <position position="45"/>
    </location>
    <ligand>
        <name>ATP</name>
        <dbReference type="ChEBI" id="CHEBI:30616"/>
    </ligand>
</feature>
<feature type="modified residue" description="Phosphothreonine" evidence="2">
    <location>
        <position position="176"/>
    </location>
</feature>
<feature type="modified residue" description="Phosphotyrosine" evidence="2">
    <location>
        <position position="178"/>
    </location>
</feature>